<protein>
    <recommendedName>
        <fullName>Porin Omp2b</fullName>
    </recommendedName>
</protein>
<organism>
    <name type="scientific">Brucella canis</name>
    <dbReference type="NCBI Taxonomy" id="36855"/>
    <lineage>
        <taxon>Bacteria</taxon>
        <taxon>Pseudomonadati</taxon>
        <taxon>Pseudomonadota</taxon>
        <taxon>Alphaproteobacteria</taxon>
        <taxon>Hyphomicrobiales</taxon>
        <taxon>Brucellaceae</taxon>
        <taxon>Brucella/Ochrobactrum group</taxon>
        <taxon>Brucella</taxon>
    </lineage>
</organism>
<name>OMP2B_BRUCA</name>
<dbReference type="EMBL" id="U26439">
    <property type="protein sequence ID" value="AAA67787.1"/>
    <property type="status" value="ALT_INIT"/>
    <property type="molecule type" value="Genomic_DNA"/>
</dbReference>
<dbReference type="RefSeq" id="WP_006132439.1">
    <property type="nucleotide sequence ID" value="NZ_UFQW01000008.1"/>
</dbReference>
<dbReference type="SMR" id="Q45078"/>
<dbReference type="KEGG" id="bcar:DK60_714"/>
<dbReference type="KEGG" id="bcas:DA85_03035"/>
<dbReference type="GO" id="GO:0009279">
    <property type="term" value="C:cell outer membrane"/>
    <property type="evidence" value="ECO:0007669"/>
    <property type="project" value="UniProtKB-SubCell"/>
</dbReference>
<dbReference type="GO" id="GO:0046930">
    <property type="term" value="C:pore complex"/>
    <property type="evidence" value="ECO:0007669"/>
    <property type="project" value="UniProtKB-KW"/>
</dbReference>
<dbReference type="GO" id="GO:0015288">
    <property type="term" value="F:porin activity"/>
    <property type="evidence" value="ECO:0007669"/>
    <property type="project" value="UniProtKB-KW"/>
</dbReference>
<dbReference type="GO" id="GO:0006811">
    <property type="term" value="P:monoatomic ion transport"/>
    <property type="evidence" value="ECO:0007669"/>
    <property type="project" value="UniProtKB-KW"/>
</dbReference>
<dbReference type="InterPro" id="IPR003684">
    <property type="entry name" value="Porin_alphabac"/>
</dbReference>
<dbReference type="Pfam" id="PF02530">
    <property type="entry name" value="Porin_2"/>
    <property type="match status" value="1"/>
</dbReference>
<dbReference type="SUPFAM" id="SSF56935">
    <property type="entry name" value="Porins"/>
    <property type="match status" value="1"/>
</dbReference>
<comment type="function">
    <text evidence="1">Forms passive diffusion pores that allow small molecular weight hydrophilic materials across the outer membrane.</text>
</comment>
<comment type="subunit">
    <text evidence="1">Homotrimer.</text>
</comment>
<comment type="subcellular location">
    <subcellularLocation>
        <location evidence="1">Cell outer membrane</location>
        <topology evidence="1">Multi-pass membrane protein</topology>
    </subcellularLocation>
</comment>
<comment type="domain">
    <text evidence="1">Consists of 16-stranded beta-barrel sheets, with large surface-exposed loops, that form a transmembrane pore at the center of each barrel. The pore is partially ocluded by a peptide loop that folds into the pore lumen.</text>
</comment>
<comment type="miscellaneous">
    <text evidence="1">The pore formed by Omp2a is larger than the one formed by Omp2b. Omp2b pores have optimal permeability to allow growth and protection against harmful compounds. The larger pore formed by Omp2a may be advantageous for intracellular growth, when the bacterium is competing with the host cell for nutrients whose concentration is particularly low within the phagosome.</text>
</comment>
<comment type="similarity">
    <text evidence="3">Belongs to the alphaproteobacteria porin family.</text>
</comment>
<comment type="sequence caution" evidence="3">
    <conflict type="erroneous initiation">
        <sequence resource="EMBL-CDS" id="AAA67787"/>
    </conflict>
</comment>
<feature type="signal peptide" evidence="2">
    <location>
        <begin position="1"/>
        <end position="22"/>
    </location>
</feature>
<feature type="chain" id="PRO_0000354012" description="Porin Omp2b">
    <location>
        <begin position="23"/>
        <end position="362"/>
    </location>
</feature>
<reference key="1">
    <citation type="journal article" date="1996" name="Int. J. Syst. Bacteriol.">
        <title>Species-specific sequences at the omp2 locus of Brucella type strains.</title>
        <authorList>
            <person name="Ficht T.A."/>
            <person name="Husseinen H.S."/>
            <person name="Derr J."/>
            <person name="Bearden S.W."/>
        </authorList>
    </citation>
    <scope>NUCLEOTIDE SEQUENCE [GENOMIC DNA]</scope>
</reference>
<gene>
    <name type="primary">omp2b</name>
</gene>
<evidence type="ECO:0000250" key="1">
    <source>
        <dbReference type="UniProtKB" id="Q44665"/>
    </source>
</evidence>
<evidence type="ECO:0000255" key="2"/>
<evidence type="ECO:0000305" key="3"/>
<sequence length="362" mass="38737">MNIKSLLLGSAAALVAASGAQAADAIVAPEPEAVEYVRVCDAYGAGYFYIPGTETCLRVHGYVRYDVKGGDDVYTGSDRKGWDKSARFALRVSTGSETELGTLKTFTELRFNYAANNSGVDGKYGNETSSGTVMEFAYIQLGGLRVGIDESEFHTFTGYLGDVINDDVISAGSYRTGKISYTFTGGNGFSAVIALEQGGDNDGGYTGTTNYHIDGYMPDVVGGLKYAGGWGSIAGVVAYDSVIEEWAAKVRGDVNITDQFSVWLQGAYSSAATPDQNYGQWGGDWAVWGGLKYQATQKAAFNLQAAHDDWGKTAVTANVAYELVPGFTVTPEVSYTKFGGEWKNTVAEDNAWGGIVRFQRSF</sequence>
<keyword id="KW-0998">Cell outer membrane</keyword>
<keyword id="KW-0406">Ion transport</keyword>
<keyword id="KW-0472">Membrane</keyword>
<keyword id="KW-0626">Porin</keyword>
<keyword id="KW-0732">Signal</keyword>
<keyword id="KW-0812">Transmembrane</keyword>
<keyword id="KW-1134">Transmembrane beta strand</keyword>
<keyword id="KW-0813">Transport</keyword>
<accession>Q45078</accession>
<proteinExistence type="inferred from homology"/>